<organismHost>
    <name type="scientific">Alliaria petiolata</name>
    <name type="common">Garlic mustard</name>
    <name type="synonym">Arabis petiolata</name>
    <dbReference type="NCBI Taxonomy" id="126270"/>
</organismHost>
<organismHost>
    <name type="scientific">Brassica</name>
    <dbReference type="NCBI Taxonomy" id="3705"/>
</organismHost>
<organismHost>
    <name type="scientific">Calanthe</name>
    <dbReference type="NCBI Taxonomy" id="38206"/>
</organismHost>
<organismHost>
    <name type="scientific">Capsella bursa-pastoris</name>
    <name type="common">Shepherd's purse</name>
    <name type="synonym">Thlaspi bursa-pastoris</name>
    <dbReference type="NCBI Taxonomy" id="3719"/>
</organismHost>
<organismHost>
    <name type="scientific">Hesperis matronalis</name>
    <dbReference type="NCBI Taxonomy" id="264418"/>
</organismHost>
<organismHost>
    <name type="scientific">Stellaria media</name>
    <name type="common">Common chickweed</name>
    <name type="synonym">Alsine media</name>
    <dbReference type="NCBI Taxonomy" id="13274"/>
</organismHost>
<organismHost>
    <name type="scientific">Trifolium hybridum</name>
    <name type="common">Alsike clover</name>
    <dbReference type="NCBI Taxonomy" id="74517"/>
</organismHost>
<proteinExistence type="evidence at protein level"/>
<reference key="1">
    <citation type="journal article" date="1996" name="Arch. Virol.">
        <title>The complete nucleotide sequence of turnip mosaic virus RNA Japanese strain.</title>
        <authorList>
            <person name="Ohshima K."/>
            <person name="Tanaka M."/>
            <person name="Sako N."/>
        </authorList>
    </citation>
    <scope>NUCLEOTIDE SEQUENCE [GENOMIC RNA]</scope>
    <scope>VARIANTS</scope>
</reference>
<reference key="2">
    <citation type="journal article" date="2000" name="Mol. Plant Microbe Interact.">
        <title>The cylindrical inclusion gene of Turnip mosaic virus encodes a pathogenic determinant to the Brassica resistance gene TuRB01.</title>
        <authorList>
            <person name="Jenner C.E."/>
            <person name="Sanchez F."/>
            <person name="Nettleship S.B."/>
            <person name="Foster G.D."/>
            <person name="Ponz F."/>
            <person name="Walsh J.A."/>
        </authorList>
    </citation>
    <scope>NUCLEOTIDE SEQUENCE [LARGE SCALE GENOMIC DNA]</scope>
    <source>
        <strain>UK1</strain>
    </source>
</reference>
<reference key="3">
    <citation type="journal article" date="2008" name="Proc. Natl. Acad. Sci. U.S.A.">
        <title>An overlapping essential gene in the Potyviridae.</title>
        <authorList>
            <person name="Chung B.Y.-W."/>
            <person name="Miller W.A."/>
            <person name="Atkins J.F."/>
            <person name="Firth A.E."/>
        </authorList>
    </citation>
    <scope>CHARACTERIZATION</scope>
    <scope>FUNCTION</scope>
    <scope>SUBCELLULAR LOCATION (MOVEMENT PROTEIN P3N-PIPO)</scope>
</reference>
<reference key="4">
    <citation type="journal article" date="2010" name="PLoS Pathog.">
        <title>Formation of complexes at plasmodesmata for potyvirus intercellular movement is mediated by the viral protein P3N-PIPO.</title>
        <authorList>
            <person name="Wei T."/>
            <person name="Zhang C."/>
            <person name="Hong J."/>
            <person name="Xiong R."/>
            <person name="Kasschau K.D."/>
            <person name="Zhou X."/>
            <person name="Carrington J.C."/>
            <person name="Wang A."/>
        </authorList>
    </citation>
    <scope>FUNCTION (MOVEMENT PROTEIN P3N-PIPO)</scope>
</reference>
<reference key="5">
    <citation type="journal article" date="2012" name="PLoS Pathog.">
        <title>Interaction of the trans-frame potyvirus protein P3N-PIPO with host protein PCaP1 facilitates potyvirus movement.</title>
        <authorList>
            <person name="Vijayapalani P."/>
            <person name="Maeshima M."/>
            <person name="Nagasaki-Takekuchi N."/>
            <person name="Miller W.A."/>
        </authorList>
    </citation>
    <scope>FUNCTION (MOVEMENT PROTEIN P3N-PIPO)</scope>
    <scope>RIBOSOMAL FRAMESHIFTING</scope>
    <scope>INTERACTION WITH HOST PCAP1 (MOVEMENT PROTEIN P3N-PIPO)</scope>
</reference>
<reference key="6">
    <citation type="journal article" date="2021" name="PLoS ONE">
        <title>Analysis of proteolytic processing sites in potyvirus polyproteins revealed differential amino acid preferences of NIa-Pro protease in each of seven cleavage sites.</title>
        <authorList>
            <person name="Goh C.J."/>
            <person name="Hahn Y."/>
        </authorList>
    </citation>
    <scope>PROTEOLYTIC CLEAVAGE (P3N-PIPO POLYPROTEIN)</scope>
</reference>
<accession>P0CK11</accession>
<sequence>MAAVTFASAITNAITSKPALTGMVQFGSFPPMPLRSTTVTTVATSVAQPKLYTVQFGSLDPVVVKSGAGSLAKATRQQPNVEIDVSLSEAAALEVAKPRSNAVLRMHEEANKERALFLDWEASLKRSSYGIAEDEKVVMTTHGVSKIVPRSSRAMKLKRARERRRAQQPIILKWEPKLSGISIGGGLSASVIEAEEVRTKWPLHKTPSMKKRTVHRICKMNDQGVDMLTRSLVKIFKTKSANIEYIGKKSIKVDFIRKERTKFARIQVAHLLGKRAQRDLLTGMEENHFIDILSKYSGNKTTINPGVVCAGWSGIVVGNGILTQKRSRSPSEAFVIRGEHEGKLYDARIKVTRTMSHKIVHFSAAGANFWKGFDRCFLAYRSDNREHTCYSGLDVTECGEVAALMCLAMFPCGKITCPDCVTDSELSQGQASGPSMKHRLTQLRDVIKSSYPRFKHAVQILDRYEQSLSSANENYQDFAEIQSISDGVEKAAFPHVNKLNAILIKGATVTGEEFSQATKHLLEIARYLKNRTENIEKGSLKSFRNKISQKAHINPTLMCDNQLDRNGNFIWGERGYHAKRFFSNYFEIIDPKKGYTQYETRAVPNGSRKLAIGKLIVPTNFEVLREQMKGEPVEPYPVTVECVSKLQGDFVHACCCVTTESGDPVLSEIKMPTKHHLVIGNSGDPKYIDLPEIEENKMYIAKEGYCYINIFLAMLVNVKESQAKEFTKVVRDKLVGELGKWPTLLDVATACYFLKVFYPDVANAELPRMLVDHKTKIIHVVDSYGSLSTGYHVLKTNTVEQLIKFTRCNLESSLKHYRVGGTEWEDTHGSSNIDNPQWCIKRLIKGVYKPKQLKEDMLANPFLPLYALLSPGVILAFYNSGSLEYLMNHYIRVDSNVAVLLVVLKSLAKKVSTSQSVLAQLQIIERSLPELIEAKANVNGPDDAATRACNRFMGMLLHMAEPNWELADGGYTILRDHSISILEKKLSTNLGRSMERVKLVGALCYKILLVKASNLYTERFANEKRSRFRRQIQRVSHVILRTE</sequence>
<comment type="function">
    <molecule>Helper component proteinase</molecule>
    <text evidence="2 4">Cysteine protease that cleaves a Gly-Gly dipeptide at its own C-terminus (By similarity). Required for aphid transmission and also has proteolytic activity (By similarity). Interacts with virions and aphid stylets (By similarity). Acts as a suppressor of RNA-mediated gene silencing, also known as post-transcriptional gene silencing (PTGS), a mechanism of plant viral defense that limits the accumulation of viral RNAs (By similarity). May have RNA-binding activity (By similarity).</text>
</comment>
<comment type="function">
    <molecule>Movement protein P3N-PIPO</molecule>
    <text evidence="6 7 8">Allows efficient cell to cell propagation, by bypassing the host cell wall barrier. Transports viral genome to neighboring plant cells directly through plasmosdesmata, without any budding.</text>
</comment>
<comment type="catalytic activity">
    <molecule>Helper component proteinase</molecule>
    <reaction evidence="4">
        <text>Hydrolyzes a Gly-|-Gly bond at its own C-terminus, commonly in the sequence -Tyr-Xaa-Val-Gly-|-Gly, in the processing of the potyviral polyprotein.</text>
        <dbReference type="EC" id="3.4.22.45"/>
    </reaction>
</comment>
<comment type="subunit">
    <molecule>Movement protein P3N-PIPO</molecule>
    <text evidence="8">Interacts (via PIPO domain) with host PCaP1 protein; this interaction may help to anchor the movement complex to the plasma membrane from which the complex could move to the plasmodesmata.</text>
</comment>
<comment type="subcellular location">
    <molecule>Movement protein P3N-PIPO</molecule>
    <subcellularLocation>
        <location evidence="6">Host cell junction</location>
        <location evidence="6">Host plasmodesma</location>
    </subcellularLocation>
</comment>
<comment type="alternative products">
    <event type="ribosomal frameshifting"/>
    <isoform>
        <id>P0CK11-1</id>
        <name>P3N-PIPO polyprotein</name>
        <sequence type="displayed"/>
    </isoform>
    <isoform>
        <id>P89509-1</id>
        <name>Genome polyprotein</name>
        <sequence type="external"/>
    </isoform>
</comment>
<comment type="domain">
    <molecule>Helper component proteinase</molecule>
    <text evidence="1">The N-terminus of helper component proteinase is involved in interaction with stylets. The central part is involved in interaction with virions and the C-terminus is involved in cell-to cell movement of the virus (By similarity).</text>
</comment>
<comment type="PTM">
    <text evidence="9">Potyviral RNA is expressed as two polyproteins which undergo post-translational proteolytic processing. Genome polyprotein is processed by NIa-pro, P1 and HC-pro proteinases resulting in the production of at least ten individual proteins. P3N-PIPO is cleaved by P1 and HC-pro proteinases resulting in the production of three individual proteins. The P1 proteinase and the HC-pro cleave only their respective C-termini autocatalytically.</text>
</comment>
<comment type="miscellaneous">
    <molecule>Isoform P3N-PIPO polyprotein</molecule>
    <text>Produced by -1 ribosomal frameshifting in P3 ORF.</text>
</comment>
<comment type="similarity">
    <text evidence="10">Belongs to the potyviridae P3N-PIPO polyprotein family.</text>
</comment>
<feature type="chain" id="PRO_0000420039" description="P3N-PIPO polyprotein">
    <location>
        <begin position="1"/>
        <end position="1043"/>
    </location>
</feature>
<feature type="chain" id="PRO_0000420040" description="P1 protease" evidence="3">
    <location>
        <begin position="1"/>
        <end position="362"/>
    </location>
</feature>
<feature type="chain" id="PRO_0000420041" description="Helper component proteinase" evidence="3">
    <location>
        <begin position="363"/>
        <end position="820"/>
    </location>
</feature>
<feature type="chain" id="PRO_0000408535" description="Movement protein P3N-PIPO">
    <location>
        <begin position="821"/>
        <end position="1043"/>
    </location>
</feature>
<feature type="domain" description="Peptidase S30" evidence="5">
    <location>
        <begin position="219"/>
        <end position="362"/>
    </location>
</feature>
<feature type="domain" description="Peptidase C6" evidence="4">
    <location>
        <begin position="698"/>
        <end position="820"/>
    </location>
</feature>
<feature type="short sequence motif" description="Involved in interaction with stylet and aphid transmission" evidence="1">
    <location>
        <begin position="414"/>
        <end position="417"/>
    </location>
</feature>
<feature type="short sequence motif" description="Involved in virions binding and aphid transmission" evidence="1">
    <location>
        <begin position="672"/>
        <end position="674"/>
    </location>
</feature>
<feature type="active site" description="For P1 proteinase activity" evidence="5">
    <location>
        <position position="270"/>
    </location>
</feature>
<feature type="active site" description="For P1 proteinase activity" evidence="5">
    <location>
        <position position="279"/>
    </location>
</feature>
<feature type="active site" description="For P1 proteinase activity" evidence="5">
    <location>
        <position position="313"/>
    </location>
</feature>
<feature type="active site" description="For helper component proteinase activity" evidence="4">
    <location>
        <position position="706"/>
    </location>
</feature>
<feature type="active site" description="For helper component proteinase activity" evidence="4">
    <location>
        <position position="779"/>
    </location>
</feature>
<feature type="site" description="Cleavage; by P1 proteinase" evidence="5">
    <location>
        <begin position="362"/>
        <end position="363"/>
    </location>
</feature>
<feature type="site" description="Cleavage; by autolysis" evidence="4">
    <location>
        <begin position="820"/>
        <end position="821"/>
    </location>
</feature>
<feature type="sequence variant" evidence="11">
    <original>SAITNAIT</original>
    <variation>TAITNTTA</variation>
    <location>
        <begin position="8"/>
        <end position="15"/>
    </location>
</feature>
<feature type="sequence variant" evidence="11">
    <original>VQFGSFPPM</original>
    <variation>IQFGNFPPV</variation>
    <location>
        <begin position="24"/>
        <end position="32"/>
    </location>
</feature>
<feature type="sequence variant" evidence="11">
    <original>Y</original>
    <variation>H</variation>
    <location>
        <position position="52"/>
    </location>
</feature>
<feature type="sequence variant" evidence="11">
    <original>L</original>
    <variation>F</variation>
    <location>
        <position position="71"/>
    </location>
</feature>
<feature type="sequence variant" evidence="11">
    <original>S</original>
    <variation>P</variation>
    <location>
        <position position="100"/>
    </location>
</feature>
<feature type="sequence variant" evidence="11">
    <original>D</original>
    <variation>N</variation>
    <location>
        <position position="134"/>
    </location>
</feature>
<feature type="sequence variant" evidence="11">
    <original>H</original>
    <variation>R</variation>
    <location>
        <position position="142"/>
    </location>
</feature>
<feature type="sequence variant" evidence="11">
    <original>RAMKL</original>
    <variation>GAMKQ</variation>
    <location>
        <begin position="153"/>
        <end position="157"/>
    </location>
</feature>
<feature type="sequence variant" evidence="11">
    <original>VIEAEEV</original>
    <variation>AIEVEEA</variation>
    <location>
        <begin position="191"/>
        <end position="197"/>
    </location>
</feature>
<feature type="sequence variant" evidence="11">
    <original>KRTVHRI</original>
    <variation>RKTVHRR</variation>
    <location>
        <begin position="211"/>
        <end position="217"/>
    </location>
</feature>
<feature type="sequence variant" evidence="11">
    <original>VDMLTRSLVKIFKT</original>
    <variation>IDMLMRSLIKIFKA</variation>
    <location>
        <begin position="225"/>
        <end position="238"/>
    </location>
</feature>
<feature type="sequence variant" evidence="11">
    <original>YIGK</original>
    <variation>FIGR</variation>
    <location>
        <begin position="245"/>
        <end position="248"/>
    </location>
</feature>
<feature type="sequence variant" evidence="11">
    <original>IRKER</original>
    <variation>VKKEQ</variation>
    <location>
        <begin position="256"/>
        <end position="260"/>
    </location>
</feature>
<feature type="sequence variant" evidence="11">
    <original>IQVA</original>
    <variation>VQVV</variation>
    <location>
        <begin position="266"/>
        <end position="269"/>
    </location>
</feature>
<feature type="sequence variant" evidence="11">
    <original>L</original>
    <variation>S</variation>
    <location>
        <position position="281"/>
    </location>
</feature>
<feature type="sequence variant" evidence="11">
    <original>K</original>
    <variation>G</variation>
    <location>
        <position position="295"/>
    </location>
</feature>
<feature type="sequence variant" evidence="11">
    <original>GN</original>
    <variation>RD</variation>
    <location>
        <begin position="318"/>
        <end position="319"/>
    </location>
</feature>
<feature type="sequence variant" evidence="11">
    <original>V</original>
    <variation>I</variation>
    <location>
        <position position="351"/>
    </location>
</feature>
<feature type="sequence variant" evidence="11">
    <original>T</original>
    <variation>V</variation>
    <location>
        <position position="441"/>
    </location>
</feature>
<feature type="sequence variant" evidence="11">
    <original>S</original>
    <variation>R</variation>
    <location>
        <position position="469"/>
    </location>
</feature>
<feature type="sequence variant" evidence="11">
    <original>V</original>
    <variation>A</variation>
    <location>
        <position position="509"/>
    </location>
</feature>
<feature type="sequence variant" evidence="11">
    <original>A</original>
    <variation>V</variation>
    <location>
        <position position="602"/>
    </location>
</feature>
<feature type="sequence variant" evidence="11">
    <original>SSNIDN</original>
    <variation>AKNIDD</variation>
    <location>
        <begin position="830"/>
        <end position="835"/>
    </location>
</feature>
<feature type="sequence variant" evidence="11">
    <original>K</original>
    <variation>R</variation>
    <location>
        <position position="849"/>
    </location>
</feature>
<feature type="sequence variant" evidence="11">
    <original>E</original>
    <variation>D</variation>
    <location>
        <position position="925"/>
    </location>
</feature>
<feature type="sequence variant" evidence="11">
    <original>IEAKANVNGPDDAAT</original>
    <variation>VEARANINRPDDEAA</variation>
    <location>
        <begin position="932"/>
        <end position="946"/>
    </location>
</feature>
<feature type="sequence variant" evidence="11">
    <original>A</original>
    <variation>S</variation>
    <location>
        <position position="960"/>
    </location>
</feature>
<feature type="sequence variant" evidence="11">
    <original>L</original>
    <variation>F</variation>
    <location>
        <position position="1015"/>
    </location>
</feature>
<feature type="sequence variant" evidence="11">
    <original>H</original>
    <variation>R</variation>
    <location>
        <position position="1037"/>
    </location>
</feature>
<feature type="sequence variant" evidence="11">
    <original>T</original>
    <variation>M</variation>
    <location>
        <position position="1042"/>
    </location>
</feature>
<feature type="unsure residue">
    <location>
        <begin position="982"/>
        <end position="988"/>
    </location>
</feature>
<evidence type="ECO:0000250" key="1"/>
<evidence type="ECO:0000250" key="2">
    <source>
        <dbReference type="UniProtKB" id="P04517"/>
    </source>
</evidence>
<evidence type="ECO:0000255" key="3"/>
<evidence type="ECO:0000255" key="4">
    <source>
        <dbReference type="PROSITE-ProRule" id="PRU01080"/>
    </source>
</evidence>
<evidence type="ECO:0000255" key="5">
    <source>
        <dbReference type="PROSITE-ProRule" id="PRU01219"/>
    </source>
</evidence>
<evidence type="ECO:0000269" key="6">
    <source>
    </source>
</evidence>
<evidence type="ECO:0000269" key="7">
    <source>
    </source>
</evidence>
<evidence type="ECO:0000269" key="8">
    <source>
    </source>
</evidence>
<evidence type="ECO:0000269" key="9">
    <source>
    </source>
</evidence>
<evidence type="ECO:0000305" key="10"/>
<evidence type="ECO:0000305" key="11">
    <source>
    </source>
</evidence>
<name>MVP_TUMVJ</name>
<dbReference type="EC" id="3.4.21.-"/>
<dbReference type="EC" id="3.4.22.45" evidence="4"/>
<dbReference type="EMBL" id="D83184">
    <property type="status" value="NOT_ANNOTATED_CDS"/>
    <property type="molecule type" value="Genomic_RNA"/>
</dbReference>
<dbReference type="EMBL" id="AF169561">
    <property type="status" value="NOT_ANNOTATED_CDS"/>
    <property type="molecule type" value="Genomic_RNA"/>
</dbReference>
<dbReference type="SMR" id="P0CK11"/>
<dbReference type="Proteomes" id="UP000008262">
    <property type="component" value="Genome"/>
</dbReference>
<dbReference type="Proteomes" id="UP000201106">
    <property type="component" value="Segment"/>
</dbReference>
<dbReference type="GO" id="GO:0044219">
    <property type="term" value="C:host cell plasmodesma"/>
    <property type="evidence" value="ECO:0007669"/>
    <property type="project" value="UniProtKB-SubCell"/>
</dbReference>
<dbReference type="GO" id="GO:0004197">
    <property type="term" value="F:cysteine-type endopeptidase activity"/>
    <property type="evidence" value="ECO:0007669"/>
    <property type="project" value="InterPro"/>
</dbReference>
<dbReference type="GO" id="GO:0008236">
    <property type="term" value="F:serine-type peptidase activity"/>
    <property type="evidence" value="ECO:0007669"/>
    <property type="project" value="UniProtKB-KW"/>
</dbReference>
<dbReference type="GO" id="GO:0006508">
    <property type="term" value="P:proteolysis"/>
    <property type="evidence" value="ECO:0007669"/>
    <property type="project" value="UniProtKB-KW"/>
</dbReference>
<dbReference type="GO" id="GO:0052170">
    <property type="term" value="P:symbiont-mediated suppression of host innate immune response"/>
    <property type="evidence" value="ECO:0007669"/>
    <property type="project" value="UniProtKB-KW"/>
</dbReference>
<dbReference type="GO" id="GO:0046740">
    <property type="term" value="P:transport of virus in host, cell to cell"/>
    <property type="evidence" value="ECO:0000315"/>
    <property type="project" value="CACAO"/>
</dbReference>
<dbReference type="GO" id="GO:0075523">
    <property type="term" value="P:viral translational frameshifting"/>
    <property type="evidence" value="ECO:0007669"/>
    <property type="project" value="UniProtKB-KW"/>
</dbReference>
<dbReference type="Gene3D" id="3.90.70.150">
    <property type="entry name" value="Helper component proteinase"/>
    <property type="match status" value="1"/>
</dbReference>
<dbReference type="InterPro" id="IPR001456">
    <property type="entry name" value="HC-pro"/>
</dbReference>
<dbReference type="InterPro" id="IPR031159">
    <property type="entry name" value="HC_PRO_CPD_dom"/>
</dbReference>
<dbReference type="InterPro" id="IPR042308">
    <property type="entry name" value="HC_PRO_CPD_sf"/>
</dbReference>
<dbReference type="InterPro" id="IPR002540">
    <property type="entry name" value="Pept_S30_P1_potyvir"/>
</dbReference>
<dbReference type="InterPro" id="IPR039560">
    <property type="entry name" value="Potyvirid-P3"/>
</dbReference>
<dbReference type="Pfam" id="PF00851">
    <property type="entry name" value="Peptidase_C6"/>
    <property type="match status" value="1"/>
</dbReference>
<dbReference type="Pfam" id="PF01577">
    <property type="entry name" value="Peptidase_S30"/>
    <property type="match status" value="1"/>
</dbReference>
<dbReference type="Pfam" id="PF13608">
    <property type="entry name" value="Potyvirid-P3"/>
    <property type="match status" value="1"/>
</dbReference>
<dbReference type="PROSITE" id="PS51744">
    <property type="entry name" value="HC_PRO_CPD"/>
    <property type="match status" value="1"/>
</dbReference>
<dbReference type="PROSITE" id="PS51871">
    <property type="entry name" value="PV_P1_PRO"/>
    <property type="match status" value="1"/>
</dbReference>
<protein>
    <recommendedName>
        <fullName>P3N-PIPO polyprotein</fullName>
    </recommendedName>
    <component>
        <recommendedName>
            <fullName>P1 protease</fullName>
            <ecNumber>3.4.21.-</ecNumber>
        </recommendedName>
        <alternativeName>
            <fullName>N-terminal protein</fullName>
        </alternativeName>
        <alternativeName>
            <fullName>P1 proteinase</fullName>
        </alternativeName>
    </component>
    <component>
        <recommendedName>
            <fullName evidence="4">Helper component proteinase</fullName>
            <shortName evidence="4">HC-pro</shortName>
            <ecNumber evidence="4">3.4.22.45</ecNumber>
        </recommendedName>
    </component>
    <component>
        <recommendedName>
            <fullName>Movement protein P3N-PIPO</fullName>
        </recommendedName>
        <alternativeName>
            <fullName>Pretty interesting potyviridae ORF</fullName>
            <shortName>PIPO</shortName>
        </alternativeName>
    </component>
</protein>
<keyword id="KW-1031">Host cell junction</keyword>
<keyword id="KW-0945">Host-virus interaction</keyword>
<keyword id="KW-0378">Hydrolase</keyword>
<keyword id="KW-1090">Inhibition of host innate immune response by virus</keyword>
<keyword id="KW-0645">Protease</keyword>
<keyword id="KW-1185">Reference proteome</keyword>
<keyword id="KW-0688">Ribosomal frameshifting</keyword>
<keyword id="KW-0720">Serine protease</keyword>
<keyword id="KW-0941">Suppressor of RNA silencing</keyword>
<keyword id="KW-0813">Transport</keyword>
<keyword id="KW-0899">Viral immunoevasion</keyword>
<keyword id="KW-0916">Viral movement protein</keyword>
<organism>
    <name type="scientific">Turnip mosaic virus (strain Japanese)</name>
    <name type="common">TuMV</name>
    <dbReference type="NCBI Taxonomy" id="12230"/>
    <lineage>
        <taxon>Viruses</taxon>
        <taxon>Riboviria</taxon>
        <taxon>Orthornavirae</taxon>
        <taxon>Pisuviricota</taxon>
        <taxon>Stelpaviricetes</taxon>
        <taxon>Patatavirales</taxon>
        <taxon>Potyviridae</taxon>
        <taxon>Potyvirus</taxon>
        <taxon>Potyvirus rapae</taxon>
    </lineage>
</organism>